<proteinExistence type="inferred from homology"/>
<organism>
    <name type="scientific">Anaeromyxobacter dehalogenans (strain 2CP-1 / ATCC BAA-258)</name>
    <dbReference type="NCBI Taxonomy" id="455488"/>
    <lineage>
        <taxon>Bacteria</taxon>
        <taxon>Pseudomonadati</taxon>
        <taxon>Myxococcota</taxon>
        <taxon>Myxococcia</taxon>
        <taxon>Myxococcales</taxon>
        <taxon>Cystobacterineae</taxon>
        <taxon>Anaeromyxobacteraceae</taxon>
        <taxon>Anaeromyxobacter</taxon>
    </lineage>
</organism>
<name>HIS4_ANAD2</name>
<reference key="1">
    <citation type="submission" date="2009-01" db="EMBL/GenBank/DDBJ databases">
        <title>Complete sequence of Anaeromyxobacter dehalogenans 2CP-1.</title>
        <authorList>
            <person name="Lucas S."/>
            <person name="Copeland A."/>
            <person name="Lapidus A."/>
            <person name="Glavina del Rio T."/>
            <person name="Dalin E."/>
            <person name="Tice H."/>
            <person name="Bruce D."/>
            <person name="Goodwin L."/>
            <person name="Pitluck S."/>
            <person name="Saunders E."/>
            <person name="Brettin T."/>
            <person name="Detter J.C."/>
            <person name="Han C."/>
            <person name="Larimer F."/>
            <person name="Land M."/>
            <person name="Hauser L."/>
            <person name="Kyrpides N."/>
            <person name="Ovchinnikova G."/>
            <person name="Beliaev A.S."/>
            <person name="Richardson P."/>
        </authorList>
    </citation>
    <scope>NUCLEOTIDE SEQUENCE [LARGE SCALE GENOMIC DNA]</scope>
    <source>
        <strain>2CP-1 / ATCC BAA-258</strain>
    </source>
</reference>
<feature type="chain" id="PRO_1000148947" description="1-(5-phosphoribosyl)-5-[(5-phosphoribosylamino)methylideneamino] imidazole-4-carboxamide isomerase">
    <location>
        <begin position="1"/>
        <end position="238"/>
    </location>
</feature>
<feature type="active site" description="Proton acceptor" evidence="1">
    <location>
        <position position="8"/>
    </location>
</feature>
<feature type="active site" description="Proton donor" evidence="1">
    <location>
        <position position="129"/>
    </location>
</feature>
<sequence length="238" mass="24530">MLVIPAIDLIGGEVVRLEKGDFARKTVYARDPAEKAAELVRDGASLIHVVDLDGAKAGWPVNLDAVRAICAVPGAEVELGGGLRSLPDIEKVLELGVRYVVLGTAAVERLDLVRQACARFPGRVRSGIDARNGEVKIAGWLEGTGLGAAEVARRVKEAGVGLVEYTDVGRDGMFTGVDAEGAARLQAEAGVQVVASGGVAGLDDVRACRAAGLAGVIVGKALYEGRIALAEAVRAAAE</sequence>
<protein>
    <recommendedName>
        <fullName evidence="1">1-(5-phosphoribosyl)-5-[(5-phosphoribosylamino)methylideneamino] imidazole-4-carboxamide isomerase</fullName>
        <ecNumber evidence="1">5.3.1.16</ecNumber>
    </recommendedName>
    <alternativeName>
        <fullName evidence="1">Phosphoribosylformimino-5-aminoimidazole carboxamide ribotide isomerase</fullName>
    </alternativeName>
</protein>
<accession>B8JDL2</accession>
<dbReference type="EC" id="5.3.1.16" evidence="1"/>
<dbReference type="EMBL" id="CP001359">
    <property type="protein sequence ID" value="ACL64107.1"/>
    <property type="molecule type" value="Genomic_DNA"/>
</dbReference>
<dbReference type="RefSeq" id="WP_012524818.1">
    <property type="nucleotide sequence ID" value="NC_011891.1"/>
</dbReference>
<dbReference type="SMR" id="B8JDL2"/>
<dbReference type="KEGG" id="acp:A2cp1_0752"/>
<dbReference type="HOGENOM" id="CLU_048577_1_1_7"/>
<dbReference type="UniPathway" id="UPA00031">
    <property type="reaction ID" value="UER00009"/>
</dbReference>
<dbReference type="Proteomes" id="UP000007089">
    <property type="component" value="Chromosome"/>
</dbReference>
<dbReference type="GO" id="GO:0005737">
    <property type="term" value="C:cytoplasm"/>
    <property type="evidence" value="ECO:0007669"/>
    <property type="project" value="UniProtKB-SubCell"/>
</dbReference>
<dbReference type="GO" id="GO:0003949">
    <property type="term" value="F:1-(5-phosphoribosyl)-5-[(5-phosphoribosylamino)methylideneamino]imidazole-4-carboxamide isomerase activity"/>
    <property type="evidence" value="ECO:0007669"/>
    <property type="project" value="UniProtKB-UniRule"/>
</dbReference>
<dbReference type="GO" id="GO:0000105">
    <property type="term" value="P:L-histidine biosynthetic process"/>
    <property type="evidence" value="ECO:0007669"/>
    <property type="project" value="UniProtKB-UniRule"/>
</dbReference>
<dbReference type="GO" id="GO:0000162">
    <property type="term" value="P:L-tryptophan biosynthetic process"/>
    <property type="evidence" value="ECO:0007669"/>
    <property type="project" value="TreeGrafter"/>
</dbReference>
<dbReference type="CDD" id="cd04732">
    <property type="entry name" value="HisA"/>
    <property type="match status" value="1"/>
</dbReference>
<dbReference type="FunFam" id="3.20.20.70:FF:000009">
    <property type="entry name" value="1-(5-phosphoribosyl)-5-[(5-phosphoribosylamino)methylideneamino] imidazole-4-carboxamide isomerase"/>
    <property type="match status" value="1"/>
</dbReference>
<dbReference type="Gene3D" id="3.20.20.70">
    <property type="entry name" value="Aldolase class I"/>
    <property type="match status" value="1"/>
</dbReference>
<dbReference type="HAMAP" id="MF_01014">
    <property type="entry name" value="HisA"/>
    <property type="match status" value="1"/>
</dbReference>
<dbReference type="InterPro" id="IPR013785">
    <property type="entry name" value="Aldolase_TIM"/>
</dbReference>
<dbReference type="InterPro" id="IPR006062">
    <property type="entry name" value="His_biosynth"/>
</dbReference>
<dbReference type="InterPro" id="IPR006063">
    <property type="entry name" value="HisA_bact_arch"/>
</dbReference>
<dbReference type="InterPro" id="IPR044524">
    <property type="entry name" value="Isoase_HisA-like"/>
</dbReference>
<dbReference type="InterPro" id="IPR023016">
    <property type="entry name" value="Isoase_HisA-like_bact"/>
</dbReference>
<dbReference type="InterPro" id="IPR011060">
    <property type="entry name" value="RibuloseP-bd_barrel"/>
</dbReference>
<dbReference type="NCBIfam" id="TIGR00007">
    <property type="entry name" value="1-(5-phosphoribosyl)-5-[(5-phosphoribosylamino)methylideneamino]imidazole-4-carboxamide isomerase"/>
    <property type="match status" value="1"/>
</dbReference>
<dbReference type="PANTHER" id="PTHR43090">
    <property type="entry name" value="1-(5-PHOSPHORIBOSYL)-5-[(5-PHOSPHORIBOSYLAMINO)METHYLIDENEAMINO] IMIDAZOLE-4-CARBOXAMIDE ISOMERASE"/>
    <property type="match status" value="1"/>
</dbReference>
<dbReference type="PANTHER" id="PTHR43090:SF2">
    <property type="entry name" value="1-(5-PHOSPHORIBOSYL)-5-[(5-PHOSPHORIBOSYLAMINO)METHYLIDENEAMINO] IMIDAZOLE-4-CARBOXAMIDE ISOMERASE"/>
    <property type="match status" value="1"/>
</dbReference>
<dbReference type="Pfam" id="PF00977">
    <property type="entry name" value="His_biosynth"/>
    <property type="match status" value="1"/>
</dbReference>
<dbReference type="SUPFAM" id="SSF51366">
    <property type="entry name" value="Ribulose-phoshate binding barrel"/>
    <property type="match status" value="1"/>
</dbReference>
<comment type="catalytic activity">
    <reaction evidence="1">
        <text>1-(5-phospho-beta-D-ribosyl)-5-[(5-phospho-beta-D-ribosylamino)methylideneamino]imidazole-4-carboxamide = 5-[(5-phospho-1-deoxy-D-ribulos-1-ylimino)methylamino]-1-(5-phospho-beta-D-ribosyl)imidazole-4-carboxamide</text>
        <dbReference type="Rhea" id="RHEA:15469"/>
        <dbReference type="ChEBI" id="CHEBI:58435"/>
        <dbReference type="ChEBI" id="CHEBI:58525"/>
        <dbReference type="EC" id="5.3.1.16"/>
    </reaction>
</comment>
<comment type="pathway">
    <text evidence="1">Amino-acid biosynthesis; L-histidine biosynthesis; L-histidine from 5-phospho-alpha-D-ribose 1-diphosphate: step 4/9.</text>
</comment>
<comment type="subcellular location">
    <subcellularLocation>
        <location evidence="1">Cytoplasm</location>
    </subcellularLocation>
</comment>
<comment type="similarity">
    <text evidence="1">Belongs to the HisA/HisF family.</text>
</comment>
<gene>
    <name evidence="1" type="primary">hisA</name>
    <name type="ordered locus">A2cp1_0752</name>
</gene>
<evidence type="ECO:0000255" key="1">
    <source>
        <dbReference type="HAMAP-Rule" id="MF_01014"/>
    </source>
</evidence>
<keyword id="KW-0028">Amino-acid biosynthesis</keyword>
<keyword id="KW-0963">Cytoplasm</keyword>
<keyword id="KW-0368">Histidine biosynthesis</keyword>
<keyword id="KW-0413">Isomerase</keyword>